<feature type="chain" id="PRO_0000310096" description="Probable nicotinate-nucleotide adenylyltransferase">
    <location>
        <begin position="1"/>
        <end position="189"/>
    </location>
</feature>
<comment type="function">
    <text evidence="1">Catalyzes the reversible adenylation of nicotinate mononucleotide (NaMN) to nicotinic acid adenine dinucleotide (NaAD).</text>
</comment>
<comment type="catalytic activity">
    <reaction evidence="1">
        <text>nicotinate beta-D-ribonucleotide + ATP + H(+) = deamido-NAD(+) + diphosphate</text>
        <dbReference type="Rhea" id="RHEA:22860"/>
        <dbReference type="ChEBI" id="CHEBI:15378"/>
        <dbReference type="ChEBI" id="CHEBI:30616"/>
        <dbReference type="ChEBI" id="CHEBI:33019"/>
        <dbReference type="ChEBI" id="CHEBI:57502"/>
        <dbReference type="ChEBI" id="CHEBI:58437"/>
        <dbReference type="EC" id="2.7.7.18"/>
    </reaction>
</comment>
<comment type="pathway">
    <text evidence="1">Cofactor biosynthesis; NAD(+) biosynthesis; deamido-NAD(+) from nicotinate D-ribonucleotide: step 1/1.</text>
</comment>
<comment type="similarity">
    <text evidence="1">Belongs to the NadD family.</text>
</comment>
<name>NADD_BACCZ</name>
<dbReference type="EC" id="2.7.7.18" evidence="1"/>
<dbReference type="EMBL" id="CP000001">
    <property type="protein sequence ID" value="AAU16188.1"/>
    <property type="molecule type" value="Genomic_DNA"/>
</dbReference>
<dbReference type="RefSeq" id="WP_001226054.1">
    <property type="nucleotide sequence ID" value="NZ_CP009968.1"/>
</dbReference>
<dbReference type="SMR" id="Q634L0"/>
<dbReference type="KEGG" id="bcz:BCE33L4078"/>
<dbReference type="PATRIC" id="fig|288681.22.peg.1310"/>
<dbReference type="UniPathway" id="UPA00253">
    <property type="reaction ID" value="UER00332"/>
</dbReference>
<dbReference type="Proteomes" id="UP000002612">
    <property type="component" value="Chromosome"/>
</dbReference>
<dbReference type="GO" id="GO:0005524">
    <property type="term" value="F:ATP binding"/>
    <property type="evidence" value="ECO:0007669"/>
    <property type="project" value="UniProtKB-KW"/>
</dbReference>
<dbReference type="GO" id="GO:0004515">
    <property type="term" value="F:nicotinate-nucleotide adenylyltransferase activity"/>
    <property type="evidence" value="ECO:0007669"/>
    <property type="project" value="UniProtKB-UniRule"/>
</dbReference>
<dbReference type="GO" id="GO:0009435">
    <property type="term" value="P:NAD biosynthetic process"/>
    <property type="evidence" value="ECO:0007669"/>
    <property type="project" value="UniProtKB-UniRule"/>
</dbReference>
<dbReference type="CDD" id="cd02165">
    <property type="entry name" value="NMNAT"/>
    <property type="match status" value="1"/>
</dbReference>
<dbReference type="FunFam" id="3.40.50.620:FF:000079">
    <property type="entry name" value="Probable nicotinate-nucleotide adenylyltransferase"/>
    <property type="match status" value="1"/>
</dbReference>
<dbReference type="Gene3D" id="3.40.50.620">
    <property type="entry name" value="HUPs"/>
    <property type="match status" value="1"/>
</dbReference>
<dbReference type="HAMAP" id="MF_00244">
    <property type="entry name" value="NaMN_adenylyltr"/>
    <property type="match status" value="1"/>
</dbReference>
<dbReference type="InterPro" id="IPR004821">
    <property type="entry name" value="Cyt_trans-like"/>
</dbReference>
<dbReference type="InterPro" id="IPR005248">
    <property type="entry name" value="NadD/NMNAT"/>
</dbReference>
<dbReference type="InterPro" id="IPR014729">
    <property type="entry name" value="Rossmann-like_a/b/a_fold"/>
</dbReference>
<dbReference type="NCBIfam" id="TIGR00125">
    <property type="entry name" value="cyt_tran_rel"/>
    <property type="match status" value="1"/>
</dbReference>
<dbReference type="NCBIfam" id="TIGR00482">
    <property type="entry name" value="nicotinate (nicotinamide) nucleotide adenylyltransferase"/>
    <property type="match status" value="1"/>
</dbReference>
<dbReference type="NCBIfam" id="NF000840">
    <property type="entry name" value="PRK00071.1-3"/>
    <property type="match status" value="1"/>
</dbReference>
<dbReference type="NCBIfam" id="NF000841">
    <property type="entry name" value="PRK00071.1-4"/>
    <property type="match status" value="1"/>
</dbReference>
<dbReference type="PANTHER" id="PTHR39321">
    <property type="entry name" value="NICOTINATE-NUCLEOTIDE ADENYLYLTRANSFERASE-RELATED"/>
    <property type="match status" value="1"/>
</dbReference>
<dbReference type="PANTHER" id="PTHR39321:SF3">
    <property type="entry name" value="PHOSPHOPANTETHEINE ADENYLYLTRANSFERASE"/>
    <property type="match status" value="1"/>
</dbReference>
<dbReference type="Pfam" id="PF01467">
    <property type="entry name" value="CTP_transf_like"/>
    <property type="match status" value="1"/>
</dbReference>
<dbReference type="SUPFAM" id="SSF52374">
    <property type="entry name" value="Nucleotidylyl transferase"/>
    <property type="match status" value="1"/>
</dbReference>
<evidence type="ECO:0000255" key="1">
    <source>
        <dbReference type="HAMAP-Rule" id="MF_00244"/>
    </source>
</evidence>
<accession>Q634L0</accession>
<gene>
    <name evidence="1" type="primary">nadD</name>
    <name type="ordered locus">BCE33L4078</name>
</gene>
<keyword id="KW-0067">ATP-binding</keyword>
<keyword id="KW-0520">NAD</keyword>
<keyword id="KW-0547">Nucleotide-binding</keyword>
<keyword id="KW-0548">Nucleotidyltransferase</keyword>
<keyword id="KW-0662">Pyridine nucleotide biosynthesis</keyword>
<keyword id="KW-0808">Transferase</keyword>
<sequence length="189" mass="21909">MRKIGIIGGTFDPPHYGHLLIANEVYHALNLEEVWFLPNQIPPHKQGRNITSVESRLQMLELATEAEEHFSICLEELSRKGPSYTYDTMLQLTKKYPDVQFHFIIGGDMVEYLPKWYNIEALLDLVTFVGVARPGYTLHTPYPITTVEIPEFAVSSSLLRERYKEKKTCKYLLPEKVQVYIERNGLYES</sequence>
<proteinExistence type="inferred from homology"/>
<reference key="1">
    <citation type="journal article" date="2006" name="J. Bacteriol.">
        <title>Pathogenomic sequence analysis of Bacillus cereus and Bacillus thuringiensis isolates closely related to Bacillus anthracis.</title>
        <authorList>
            <person name="Han C.S."/>
            <person name="Xie G."/>
            <person name="Challacombe J.F."/>
            <person name="Altherr M.R."/>
            <person name="Bhotika S.S."/>
            <person name="Bruce D."/>
            <person name="Campbell C.S."/>
            <person name="Campbell M.L."/>
            <person name="Chen J."/>
            <person name="Chertkov O."/>
            <person name="Cleland C."/>
            <person name="Dimitrijevic M."/>
            <person name="Doggett N.A."/>
            <person name="Fawcett J.J."/>
            <person name="Glavina T."/>
            <person name="Goodwin L.A."/>
            <person name="Hill K.K."/>
            <person name="Hitchcock P."/>
            <person name="Jackson P.J."/>
            <person name="Keim P."/>
            <person name="Kewalramani A.R."/>
            <person name="Longmire J."/>
            <person name="Lucas S."/>
            <person name="Malfatti S."/>
            <person name="McMurry K."/>
            <person name="Meincke L.J."/>
            <person name="Misra M."/>
            <person name="Moseman B.L."/>
            <person name="Mundt M."/>
            <person name="Munk A.C."/>
            <person name="Okinaka R.T."/>
            <person name="Parson-Quintana B."/>
            <person name="Reilly L.P."/>
            <person name="Richardson P."/>
            <person name="Robinson D.L."/>
            <person name="Rubin E."/>
            <person name="Saunders E."/>
            <person name="Tapia R."/>
            <person name="Tesmer J.G."/>
            <person name="Thayer N."/>
            <person name="Thompson L.S."/>
            <person name="Tice H."/>
            <person name="Ticknor L.O."/>
            <person name="Wills P.L."/>
            <person name="Brettin T.S."/>
            <person name="Gilna P."/>
        </authorList>
    </citation>
    <scope>NUCLEOTIDE SEQUENCE [LARGE SCALE GENOMIC DNA]</scope>
    <source>
        <strain>ZK / E33L</strain>
    </source>
</reference>
<protein>
    <recommendedName>
        <fullName evidence="1">Probable nicotinate-nucleotide adenylyltransferase</fullName>
        <ecNumber evidence="1">2.7.7.18</ecNumber>
    </recommendedName>
    <alternativeName>
        <fullName evidence="1">Deamido-NAD(+) diphosphorylase</fullName>
    </alternativeName>
    <alternativeName>
        <fullName evidence="1">Deamido-NAD(+) pyrophosphorylase</fullName>
    </alternativeName>
    <alternativeName>
        <fullName evidence="1">Nicotinate mononucleotide adenylyltransferase</fullName>
        <shortName evidence="1">NaMN adenylyltransferase</shortName>
    </alternativeName>
</protein>
<organism>
    <name type="scientific">Bacillus cereus (strain ZK / E33L)</name>
    <dbReference type="NCBI Taxonomy" id="288681"/>
    <lineage>
        <taxon>Bacteria</taxon>
        <taxon>Bacillati</taxon>
        <taxon>Bacillota</taxon>
        <taxon>Bacilli</taxon>
        <taxon>Bacillales</taxon>
        <taxon>Bacillaceae</taxon>
        <taxon>Bacillus</taxon>
        <taxon>Bacillus cereus group</taxon>
    </lineage>
</organism>